<organism>
    <name type="scientific">Serratia proteamaculans (strain 568)</name>
    <dbReference type="NCBI Taxonomy" id="399741"/>
    <lineage>
        <taxon>Bacteria</taxon>
        <taxon>Pseudomonadati</taxon>
        <taxon>Pseudomonadota</taxon>
        <taxon>Gammaproteobacteria</taxon>
        <taxon>Enterobacterales</taxon>
        <taxon>Yersiniaceae</taxon>
        <taxon>Serratia</taxon>
    </lineage>
</organism>
<evidence type="ECO:0000255" key="1">
    <source>
        <dbReference type="HAMAP-Rule" id="MF_01015"/>
    </source>
</evidence>
<dbReference type="EMBL" id="CP000826">
    <property type="protein sequence ID" value="ABV40743.1"/>
    <property type="molecule type" value="Genomic_DNA"/>
</dbReference>
<dbReference type="SMR" id="A8GCA3"/>
<dbReference type="STRING" id="399741.Spro_1639"/>
<dbReference type="KEGG" id="spe:Spro_1639"/>
<dbReference type="eggNOG" id="COG0569">
    <property type="taxonomic scope" value="Bacteria"/>
</dbReference>
<dbReference type="eggNOG" id="COG2985">
    <property type="taxonomic scope" value="Bacteria"/>
</dbReference>
<dbReference type="HOGENOM" id="CLU_035023_2_2_6"/>
<dbReference type="OrthoDB" id="5166626at2"/>
<dbReference type="GO" id="GO:0005886">
    <property type="term" value="C:plasma membrane"/>
    <property type="evidence" value="ECO:0007669"/>
    <property type="project" value="UniProtKB-SubCell"/>
</dbReference>
<dbReference type="GO" id="GO:0008324">
    <property type="term" value="F:monoatomic cation transmembrane transporter activity"/>
    <property type="evidence" value="ECO:0007669"/>
    <property type="project" value="InterPro"/>
</dbReference>
<dbReference type="GO" id="GO:0006813">
    <property type="term" value="P:potassium ion transport"/>
    <property type="evidence" value="ECO:0007669"/>
    <property type="project" value="InterPro"/>
</dbReference>
<dbReference type="FunFam" id="3.30.70.1450:FF:000003">
    <property type="entry name" value="Putative transport protein YbjL"/>
    <property type="match status" value="1"/>
</dbReference>
<dbReference type="Gene3D" id="3.30.70.1450">
    <property type="entry name" value="Regulator of K+ conductance, C-terminal domain"/>
    <property type="match status" value="2"/>
</dbReference>
<dbReference type="HAMAP" id="MF_01015">
    <property type="entry name" value="YbjL"/>
    <property type="match status" value="1"/>
</dbReference>
<dbReference type="InterPro" id="IPR050144">
    <property type="entry name" value="AAE_transporter"/>
</dbReference>
<dbReference type="InterPro" id="IPR006037">
    <property type="entry name" value="RCK_C"/>
</dbReference>
<dbReference type="InterPro" id="IPR036721">
    <property type="entry name" value="RCK_C_sf"/>
</dbReference>
<dbReference type="InterPro" id="IPR023017">
    <property type="entry name" value="Transp_YbjL_put"/>
</dbReference>
<dbReference type="InterPro" id="IPR006512">
    <property type="entry name" value="YidE_YbjL"/>
</dbReference>
<dbReference type="NCBIfam" id="NF003440">
    <property type="entry name" value="PRK04972.1"/>
    <property type="match status" value="1"/>
</dbReference>
<dbReference type="NCBIfam" id="TIGR01625">
    <property type="entry name" value="YidE_YbjL_dupl"/>
    <property type="match status" value="2"/>
</dbReference>
<dbReference type="PANTHER" id="PTHR30445">
    <property type="entry name" value="K(+)_H(+) ANTIPORTER SUBUNIT KHTT"/>
    <property type="match status" value="1"/>
</dbReference>
<dbReference type="PANTHER" id="PTHR30445:SF10">
    <property type="entry name" value="TRANSPORT PROTEIN YBJL-RELATED"/>
    <property type="match status" value="1"/>
</dbReference>
<dbReference type="Pfam" id="PF06826">
    <property type="entry name" value="Asp-Al_Ex"/>
    <property type="match status" value="2"/>
</dbReference>
<dbReference type="Pfam" id="PF02080">
    <property type="entry name" value="TrkA_C"/>
    <property type="match status" value="2"/>
</dbReference>
<dbReference type="SUPFAM" id="SSF116726">
    <property type="entry name" value="TrkA C-terminal domain-like"/>
    <property type="match status" value="2"/>
</dbReference>
<dbReference type="PROSITE" id="PS51202">
    <property type="entry name" value="RCK_C"/>
    <property type="match status" value="2"/>
</dbReference>
<feature type="chain" id="PRO_0000329147" description="Putative transport protein Spro_1639">
    <location>
        <begin position="1"/>
        <end position="562"/>
    </location>
</feature>
<feature type="transmembrane region" description="Helical" evidence="1">
    <location>
        <begin position="8"/>
        <end position="28"/>
    </location>
</feature>
<feature type="transmembrane region" description="Helical" evidence="1">
    <location>
        <begin position="37"/>
        <end position="57"/>
    </location>
</feature>
<feature type="transmembrane region" description="Helical" evidence="1">
    <location>
        <begin position="66"/>
        <end position="86"/>
    </location>
</feature>
<feature type="transmembrane region" description="Helical" evidence="1">
    <location>
        <begin position="94"/>
        <end position="114"/>
    </location>
</feature>
<feature type="transmembrane region" description="Helical" evidence="1">
    <location>
        <begin position="158"/>
        <end position="178"/>
    </location>
</feature>
<feature type="transmembrane region" description="Helical" evidence="1">
    <location>
        <begin position="383"/>
        <end position="403"/>
    </location>
</feature>
<feature type="transmembrane region" description="Helical" evidence="1">
    <location>
        <begin position="406"/>
        <end position="426"/>
    </location>
</feature>
<feature type="transmembrane region" description="Helical" evidence="1">
    <location>
        <begin position="447"/>
        <end position="467"/>
    </location>
</feature>
<feature type="transmembrane region" description="Helical" evidence="1">
    <location>
        <begin position="475"/>
        <end position="495"/>
    </location>
</feature>
<feature type="transmembrane region" description="Helical" evidence="1">
    <location>
        <begin position="541"/>
        <end position="561"/>
    </location>
</feature>
<feature type="domain" description="RCK C-terminal 1" evidence="1">
    <location>
        <begin position="202"/>
        <end position="288"/>
    </location>
</feature>
<feature type="domain" description="RCK C-terminal 2" evidence="1">
    <location>
        <begin position="290"/>
        <end position="373"/>
    </location>
</feature>
<gene>
    <name type="ordered locus">Spro_1639</name>
</gene>
<accession>A8GCA3</accession>
<keyword id="KW-1003">Cell membrane</keyword>
<keyword id="KW-0472">Membrane</keyword>
<keyword id="KW-0677">Repeat</keyword>
<keyword id="KW-0812">Transmembrane</keyword>
<keyword id="KW-1133">Transmembrane helix</keyword>
<keyword id="KW-0813">Transport</keyword>
<comment type="subcellular location">
    <subcellularLocation>
        <location evidence="1">Cell membrane</location>
        <topology evidence="1">Multi-pass membrane protein</topology>
    </subcellularLocation>
</comment>
<comment type="similarity">
    <text evidence="1">Belongs to the AAE transporter (TC 2.A.81) family. YbjL subfamily.</text>
</comment>
<reference key="1">
    <citation type="submission" date="2007-09" db="EMBL/GenBank/DDBJ databases">
        <title>Complete sequence of chromosome of Serratia proteamaculans 568.</title>
        <authorList>
            <consortium name="US DOE Joint Genome Institute"/>
            <person name="Copeland A."/>
            <person name="Lucas S."/>
            <person name="Lapidus A."/>
            <person name="Barry K."/>
            <person name="Glavina del Rio T."/>
            <person name="Dalin E."/>
            <person name="Tice H."/>
            <person name="Pitluck S."/>
            <person name="Chain P."/>
            <person name="Malfatti S."/>
            <person name="Shin M."/>
            <person name="Vergez L."/>
            <person name="Schmutz J."/>
            <person name="Larimer F."/>
            <person name="Land M."/>
            <person name="Hauser L."/>
            <person name="Kyrpides N."/>
            <person name="Kim E."/>
            <person name="Taghavi S."/>
            <person name="Newman L."/>
            <person name="Vangronsveld J."/>
            <person name="van der Lelie D."/>
            <person name="Richardson P."/>
        </authorList>
    </citation>
    <scope>NUCLEOTIDE SEQUENCE [LARGE SCALE GENOMIC DNA]</scope>
    <source>
        <strain>568</strain>
    </source>
</reference>
<name>Y1639_SERP5</name>
<protein>
    <recommendedName>
        <fullName evidence="1">Putative transport protein Spro_1639</fullName>
    </recommendedName>
</protein>
<sequence length="562" mass="60181">MNINVASLLNGNYILLLFVVLALGLCLGKVRLGSVQLGNSIGVLVVSLLLGQQHFAINTEALNLGFMLFIFCVGVEAGPNFFSIFFRDGKNYLMLALVMVGSAMVIAIGLGKLFHWDIGLTAGMLAGSMTSTPVLVGAGDTLRNTITNGPALLAAQDHLSLGYALTYLIGLVSLIFGARYLPKLQHQDLSTSAQQIARERGLDTDSQRKVYLPVIRAYRVGPELVAWADGKNLRELGIYRQTGCYIERIRRNGILANPDGDAVLQVGDEISLVGYPDAHARLDPSFRNGKEVFDRDLLDMRIVTEEIVVKNSNAVNKRLSQLKLTDHGCFLNRVIRSQIEMPIDDSIVLNKGDVLQVSGDARRVKSVAEKIGFISIHSQVTDLLAFCAFFIIGLLIGQITIQFSNFSFGIGNAAGLLMAGIMLGFLRANHPTFGYIPQGALNMVKEFGLMVFMAGVGLSAGAGIGNSLGAVGGQMLIAGLIVSLVPVVICFLFGAYVLRMNRALLFGAIMGARTCAPAMEIISDTARSNIPALGYAGTYAIANVLLTLAGSLIVVLWPGILG</sequence>
<proteinExistence type="inferred from homology"/>